<dbReference type="EC" id="6.1.1.20" evidence="1"/>
<dbReference type="EMBL" id="CP000108">
    <property type="protein sequence ID" value="ABB28799.1"/>
    <property type="molecule type" value="Genomic_DNA"/>
</dbReference>
<dbReference type="SMR" id="Q3AQC6"/>
<dbReference type="STRING" id="340177.Cag_1544"/>
<dbReference type="KEGG" id="cch:Cag_1544"/>
<dbReference type="eggNOG" id="COG0072">
    <property type="taxonomic scope" value="Bacteria"/>
</dbReference>
<dbReference type="eggNOG" id="COG0073">
    <property type="taxonomic scope" value="Bacteria"/>
</dbReference>
<dbReference type="HOGENOM" id="CLU_016891_0_0_10"/>
<dbReference type="OrthoDB" id="9805455at2"/>
<dbReference type="GO" id="GO:0009328">
    <property type="term" value="C:phenylalanine-tRNA ligase complex"/>
    <property type="evidence" value="ECO:0007669"/>
    <property type="project" value="TreeGrafter"/>
</dbReference>
<dbReference type="GO" id="GO:0005524">
    <property type="term" value="F:ATP binding"/>
    <property type="evidence" value="ECO:0007669"/>
    <property type="project" value="UniProtKB-UniRule"/>
</dbReference>
<dbReference type="GO" id="GO:0000287">
    <property type="term" value="F:magnesium ion binding"/>
    <property type="evidence" value="ECO:0007669"/>
    <property type="project" value="UniProtKB-UniRule"/>
</dbReference>
<dbReference type="GO" id="GO:0004826">
    <property type="term" value="F:phenylalanine-tRNA ligase activity"/>
    <property type="evidence" value="ECO:0007669"/>
    <property type="project" value="UniProtKB-UniRule"/>
</dbReference>
<dbReference type="GO" id="GO:0000049">
    <property type="term" value="F:tRNA binding"/>
    <property type="evidence" value="ECO:0007669"/>
    <property type="project" value="UniProtKB-KW"/>
</dbReference>
<dbReference type="GO" id="GO:0006432">
    <property type="term" value="P:phenylalanyl-tRNA aminoacylation"/>
    <property type="evidence" value="ECO:0007669"/>
    <property type="project" value="UniProtKB-UniRule"/>
</dbReference>
<dbReference type="CDD" id="cd00769">
    <property type="entry name" value="PheRS_beta_core"/>
    <property type="match status" value="1"/>
</dbReference>
<dbReference type="CDD" id="cd02796">
    <property type="entry name" value="tRNA_bind_bactPheRS"/>
    <property type="match status" value="1"/>
</dbReference>
<dbReference type="FunFam" id="2.40.50.140:FF:000045">
    <property type="entry name" value="Phenylalanine--tRNA ligase beta subunit"/>
    <property type="match status" value="1"/>
</dbReference>
<dbReference type="Gene3D" id="3.30.56.10">
    <property type="match status" value="2"/>
</dbReference>
<dbReference type="Gene3D" id="3.30.930.10">
    <property type="entry name" value="Bira Bifunctional Protein, Domain 2"/>
    <property type="match status" value="1"/>
</dbReference>
<dbReference type="Gene3D" id="3.30.70.380">
    <property type="entry name" value="Ferrodoxin-fold anticodon-binding domain"/>
    <property type="match status" value="1"/>
</dbReference>
<dbReference type="Gene3D" id="2.40.50.140">
    <property type="entry name" value="Nucleic acid-binding proteins"/>
    <property type="match status" value="1"/>
</dbReference>
<dbReference type="Gene3D" id="3.50.40.10">
    <property type="entry name" value="Phenylalanyl-trna Synthetase, Chain B, domain 3"/>
    <property type="match status" value="1"/>
</dbReference>
<dbReference type="HAMAP" id="MF_00283">
    <property type="entry name" value="Phe_tRNA_synth_beta1"/>
    <property type="match status" value="1"/>
</dbReference>
<dbReference type="InterPro" id="IPR045864">
    <property type="entry name" value="aa-tRNA-synth_II/BPL/LPL"/>
</dbReference>
<dbReference type="InterPro" id="IPR005146">
    <property type="entry name" value="B3/B4_tRNA-bd"/>
</dbReference>
<dbReference type="InterPro" id="IPR009061">
    <property type="entry name" value="DNA-bd_dom_put_sf"/>
</dbReference>
<dbReference type="InterPro" id="IPR005121">
    <property type="entry name" value="Fdx_antiC-bd"/>
</dbReference>
<dbReference type="InterPro" id="IPR036690">
    <property type="entry name" value="Fdx_antiC-bd_sf"/>
</dbReference>
<dbReference type="InterPro" id="IPR012340">
    <property type="entry name" value="NA-bd_OB-fold"/>
</dbReference>
<dbReference type="InterPro" id="IPR045060">
    <property type="entry name" value="Phe-tRNA-ligase_IIc_bsu"/>
</dbReference>
<dbReference type="InterPro" id="IPR004532">
    <property type="entry name" value="Phe-tRNA-ligase_IIc_bsu_bact"/>
</dbReference>
<dbReference type="InterPro" id="IPR020825">
    <property type="entry name" value="Phe-tRNA_synthase-like_B3/B4"/>
</dbReference>
<dbReference type="InterPro" id="IPR041616">
    <property type="entry name" value="PheRS_beta_core"/>
</dbReference>
<dbReference type="InterPro" id="IPR002547">
    <property type="entry name" value="tRNA-bd_dom"/>
</dbReference>
<dbReference type="InterPro" id="IPR033714">
    <property type="entry name" value="tRNA_bind_bactPheRS"/>
</dbReference>
<dbReference type="InterPro" id="IPR005147">
    <property type="entry name" value="tRNA_synthase_B5-dom"/>
</dbReference>
<dbReference type="NCBIfam" id="TIGR00472">
    <property type="entry name" value="pheT_bact"/>
    <property type="match status" value="1"/>
</dbReference>
<dbReference type="NCBIfam" id="NF045760">
    <property type="entry name" value="YtpR"/>
    <property type="match status" value="1"/>
</dbReference>
<dbReference type="PANTHER" id="PTHR10947:SF0">
    <property type="entry name" value="PHENYLALANINE--TRNA LIGASE BETA SUBUNIT"/>
    <property type="match status" value="1"/>
</dbReference>
<dbReference type="PANTHER" id="PTHR10947">
    <property type="entry name" value="PHENYLALANYL-TRNA SYNTHETASE BETA CHAIN AND LEUCINE-RICH REPEAT-CONTAINING PROTEIN 47"/>
    <property type="match status" value="1"/>
</dbReference>
<dbReference type="Pfam" id="PF03483">
    <property type="entry name" value="B3_4"/>
    <property type="match status" value="1"/>
</dbReference>
<dbReference type="Pfam" id="PF03484">
    <property type="entry name" value="B5"/>
    <property type="match status" value="1"/>
</dbReference>
<dbReference type="Pfam" id="PF03147">
    <property type="entry name" value="FDX-ACB"/>
    <property type="match status" value="1"/>
</dbReference>
<dbReference type="Pfam" id="PF01588">
    <property type="entry name" value="tRNA_bind"/>
    <property type="match status" value="1"/>
</dbReference>
<dbReference type="Pfam" id="PF17759">
    <property type="entry name" value="tRNA_synthFbeta"/>
    <property type="match status" value="1"/>
</dbReference>
<dbReference type="SMART" id="SM00873">
    <property type="entry name" value="B3_4"/>
    <property type="match status" value="1"/>
</dbReference>
<dbReference type="SMART" id="SM00874">
    <property type="entry name" value="B5"/>
    <property type="match status" value="1"/>
</dbReference>
<dbReference type="SMART" id="SM00896">
    <property type="entry name" value="FDX-ACB"/>
    <property type="match status" value="1"/>
</dbReference>
<dbReference type="SUPFAM" id="SSF54991">
    <property type="entry name" value="Anticodon-binding domain of PheRS"/>
    <property type="match status" value="1"/>
</dbReference>
<dbReference type="SUPFAM" id="SSF55681">
    <property type="entry name" value="Class II aaRS and biotin synthetases"/>
    <property type="match status" value="1"/>
</dbReference>
<dbReference type="SUPFAM" id="SSF50249">
    <property type="entry name" value="Nucleic acid-binding proteins"/>
    <property type="match status" value="1"/>
</dbReference>
<dbReference type="SUPFAM" id="SSF56037">
    <property type="entry name" value="PheT/TilS domain"/>
    <property type="match status" value="1"/>
</dbReference>
<dbReference type="SUPFAM" id="SSF46955">
    <property type="entry name" value="Putative DNA-binding domain"/>
    <property type="match status" value="1"/>
</dbReference>
<dbReference type="PROSITE" id="PS51483">
    <property type="entry name" value="B5"/>
    <property type="match status" value="1"/>
</dbReference>
<dbReference type="PROSITE" id="PS51447">
    <property type="entry name" value="FDX_ACB"/>
    <property type="match status" value="1"/>
</dbReference>
<dbReference type="PROSITE" id="PS50886">
    <property type="entry name" value="TRBD"/>
    <property type="match status" value="1"/>
</dbReference>
<name>SYFB_CHLCH</name>
<protein>
    <recommendedName>
        <fullName evidence="1">Phenylalanine--tRNA ligase beta subunit</fullName>
        <ecNumber evidence="1">6.1.1.20</ecNumber>
    </recommendedName>
    <alternativeName>
        <fullName evidence="1">Phenylalanyl-tRNA synthetase beta subunit</fullName>
        <shortName evidence="1">PheRS</shortName>
    </alternativeName>
</protein>
<evidence type="ECO:0000255" key="1">
    <source>
        <dbReference type="HAMAP-Rule" id="MF_00283"/>
    </source>
</evidence>
<feature type="chain" id="PRO_0000232054" description="Phenylalanine--tRNA ligase beta subunit">
    <location>
        <begin position="1"/>
        <end position="803"/>
    </location>
</feature>
<feature type="domain" description="tRNA-binding" evidence="1">
    <location>
        <begin position="40"/>
        <end position="153"/>
    </location>
</feature>
<feature type="domain" description="B5" evidence="1">
    <location>
        <begin position="400"/>
        <end position="476"/>
    </location>
</feature>
<feature type="domain" description="FDX-ACB" evidence="1">
    <location>
        <begin position="709"/>
        <end position="801"/>
    </location>
</feature>
<feature type="binding site" evidence="1">
    <location>
        <position position="454"/>
    </location>
    <ligand>
        <name>Mg(2+)</name>
        <dbReference type="ChEBI" id="CHEBI:18420"/>
        <note>shared with alpha subunit</note>
    </ligand>
</feature>
<feature type="binding site" evidence="1">
    <location>
        <position position="460"/>
    </location>
    <ligand>
        <name>Mg(2+)</name>
        <dbReference type="ChEBI" id="CHEBI:18420"/>
        <note>shared with alpha subunit</note>
    </ligand>
</feature>
<feature type="binding site" evidence="1">
    <location>
        <position position="463"/>
    </location>
    <ligand>
        <name>Mg(2+)</name>
        <dbReference type="ChEBI" id="CHEBI:18420"/>
        <note>shared with alpha subunit</note>
    </ligand>
</feature>
<feature type="binding site" evidence="1">
    <location>
        <position position="464"/>
    </location>
    <ligand>
        <name>Mg(2+)</name>
        <dbReference type="ChEBI" id="CHEBI:18420"/>
        <note>shared with alpha subunit</note>
    </ligand>
</feature>
<comment type="catalytic activity">
    <reaction evidence="1">
        <text>tRNA(Phe) + L-phenylalanine + ATP = L-phenylalanyl-tRNA(Phe) + AMP + diphosphate + H(+)</text>
        <dbReference type="Rhea" id="RHEA:19413"/>
        <dbReference type="Rhea" id="RHEA-COMP:9668"/>
        <dbReference type="Rhea" id="RHEA-COMP:9699"/>
        <dbReference type="ChEBI" id="CHEBI:15378"/>
        <dbReference type="ChEBI" id="CHEBI:30616"/>
        <dbReference type="ChEBI" id="CHEBI:33019"/>
        <dbReference type="ChEBI" id="CHEBI:58095"/>
        <dbReference type="ChEBI" id="CHEBI:78442"/>
        <dbReference type="ChEBI" id="CHEBI:78531"/>
        <dbReference type="ChEBI" id="CHEBI:456215"/>
        <dbReference type="EC" id="6.1.1.20"/>
    </reaction>
</comment>
<comment type="cofactor">
    <cofactor evidence="1">
        <name>Mg(2+)</name>
        <dbReference type="ChEBI" id="CHEBI:18420"/>
    </cofactor>
    <text evidence="1">Binds 2 magnesium ions per tetramer.</text>
</comment>
<comment type="subunit">
    <text evidence="1">Tetramer of two alpha and two beta subunits.</text>
</comment>
<comment type="subcellular location">
    <subcellularLocation>
        <location evidence="1">Cytoplasm</location>
    </subcellularLocation>
</comment>
<comment type="similarity">
    <text evidence="1">Belongs to the phenylalanyl-tRNA synthetase beta subunit family. Type 1 subfamily.</text>
</comment>
<gene>
    <name evidence="1" type="primary">pheT</name>
    <name type="ordered locus">Cag_1544</name>
</gene>
<sequence length="803" mass="88713">MKISISWLREFLPNFSCETVSLVERLTFLGFEVEGVEESASLDRRIVVGRVLETEPHPNAERLTLCLVDVGREEPLRIVCGAPNVRAGMVVPVATEKAKLQFPDGQTLTIKPSKIRGERSQGMICAADELGLSNDHSGVMELESSWEIGKPFADYLESDVVLDIAVTPNRPDVLSHLGIARELADGAPLQYPSQQSLTYQPAGERIAINDAVACPYYTGVIIRGVTIRESPEWLRKRLQAIGLNPKNNIVDITNYMLHALGQPMHAFDCAKLAGERIAVRSDCQAEVVALNNLTYKVEGGMPVICDGSGAIAAIAGVMGGMASAVTESTTDIFLESALFHPSMVRRTAKKLALASDSSYRFERGVDSRMVQQASATAVALILELAGGTVECAMEQGSVAADLQLLALRPERTNKLLGTALSGEQMVELLERIGFRCVEQTTEQLLFAVPSFRVDVTAEIDLIEEVARLYGYNAIESSRQMATIYPTKRQHPAYFPDFLRGELITLGFREILTNPLIKRNDAALASEQLVDVLNPISEGLEVLRPSLLPGLLKVISHNIRHGNRDQKLFEVAHVFEAKPQVQQTQQPLEGYCEQERLVMAITGSRYLRRWNHPTDMVDFYDLSGAVEMLLEQLNILDKSVVNIYTPSALSIDVFLTEKGKRTTHRLGIMQPVNAAWLKHFDIEQEVYCAELDVALLERCYQPTSAYEPPSRFPVVERDISFIIPEGVSAQSLVELVQSSNPLIKTVTVFDRFERNHESGKECSIALSLTIADAKATLQDEKINDILATISRNAESKLGAVIRQV</sequence>
<keyword id="KW-0030">Aminoacyl-tRNA synthetase</keyword>
<keyword id="KW-0067">ATP-binding</keyword>
<keyword id="KW-0963">Cytoplasm</keyword>
<keyword id="KW-0436">Ligase</keyword>
<keyword id="KW-0460">Magnesium</keyword>
<keyword id="KW-0479">Metal-binding</keyword>
<keyword id="KW-0547">Nucleotide-binding</keyword>
<keyword id="KW-0648">Protein biosynthesis</keyword>
<keyword id="KW-0694">RNA-binding</keyword>
<keyword id="KW-0820">tRNA-binding</keyword>
<organism>
    <name type="scientific">Chlorobium chlorochromatii (strain CaD3)</name>
    <dbReference type="NCBI Taxonomy" id="340177"/>
    <lineage>
        <taxon>Bacteria</taxon>
        <taxon>Pseudomonadati</taxon>
        <taxon>Chlorobiota</taxon>
        <taxon>Chlorobiia</taxon>
        <taxon>Chlorobiales</taxon>
        <taxon>Chlorobiaceae</taxon>
        <taxon>Chlorobium/Pelodictyon group</taxon>
        <taxon>Chlorobium</taxon>
    </lineage>
</organism>
<accession>Q3AQC6</accession>
<proteinExistence type="inferred from homology"/>
<reference key="1">
    <citation type="submission" date="2005-08" db="EMBL/GenBank/DDBJ databases">
        <title>Complete sequence of Chlorobium chlorochromatii CaD3.</title>
        <authorList>
            <consortium name="US DOE Joint Genome Institute"/>
            <person name="Copeland A."/>
            <person name="Lucas S."/>
            <person name="Lapidus A."/>
            <person name="Barry K."/>
            <person name="Detter J.C."/>
            <person name="Glavina T."/>
            <person name="Hammon N."/>
            <person name="Israni S."/>
            <person name="Pitluck S."/>
            <person name="Bryant D."/>
            <person name="Schmutz J."/>
            <person name="Larimer F."/>
            <person name="Land M."/>
            <person name="Kyrpides N."/>
            <person name="Ivanova N."/>
            <person name="Richardson P."/>
        </authorList>
    </citation>
    <scope>NUCLEOTIDE SEQUENCE [LARGE SCALE GENOMIC DNA]</scope>
    <source>
        <strain>CaD3</strain>
    </source>
</reference>